<gene>
    <name type="primary">yidC</name>
    <name type="ordered locus">TWT_805</name>
</gene>
<evidence type="ECO:0000250" key="1"/>
<evidence type="ECO:0000255" key="2"/>
<evidence type="ECO:0000256" key="3">
    <source>
        <dbReference type="SAM" id="MobiDB-lite"/>
    </source>
</evidence>
<evidence type="ECO:0000305" key="4"/>
<keyword id="KW-1003">Cell membrane</keyword>
<keyword id="KW-0143">Chaperone</keyword>
<keyword id="KW-0472">Membrane</keyword>
<keyword id="KW-0653">Protein transport</keyword>
<keyword id="KW-1185">Reference proteome</keyword>
<keyword id="KW-0812">Transmembrane</keyword>
<keyword id="KW-1133">Transmembrane helix</keyword>
<keyword id="KW-0813">Transport</keyword>
<accession>Q83MN6</accession>
<protein>
    <recommendedName>
        <fullName>Membrane protein insertase YidC</fullName>
    </recommendedName>
    <alternativeName>
        <fullName>Foldase YidC</fullName>
    </alternativeName>
    <alternativeName>
        <fullName>Membrane integrase YidC</fullName>
    </alternativeName>
    <alternativeName>
        <fullName>Membrane protein YidC</fullName>
    </alternativeName>
</protein>
<feature type="chain" id="PRO_0000124763" description="Membrane protein insertase YidC">
    <location>
        <begin position="1"/>
        <end position="310"/>
    </location>
</feature>
<feature type="transmembrane region" description="Helical" evidence="2">
    <location>
        <begin position="16"/>
        <end position="36"/>
    </location>
</feature>
<feature type="transmembrane region" description="Helical" evidence="2">
    <location>
        <begin position="44"/>
        <end position="64"/>
    </location>
</feature>
<feature type="transmembrane region" description="Helical" evidence="2">
    <location>
        <begin position="115"/>
        <end position="135"/>
    </location>
</feature>
<feature type="transmembrane region" description="Helical" evidence="2">
    <location>
        <begin position="186"/>
        <end position="206"/>
    </location>
</feature>
<feature type="transmembrane region" description="Helical" evidence="2">
    <location>
        <begin position="232"/>
        <end position="252"/>
    </location>
</feature>
<feature type="region of interest" description="Disordered" evidence="3">
    <location>
        <begin position="290"/>
        <end position="310"/>
    </location>
</feature>
<proteinExistence type="inferred from homology"/>
<sequence length="310" mass="35047">MFDGLFDFLQNILLPIKWVIEQILVFFHTLLGFLGFGDKSGLSWALSIVGLVIVIRATLIPVFLKQIRAQRKMLEIAPEVRRIQEKYKGKRDVLSRQSMNQEMMEIYRVRGANPLSSCLPIVLQMPVFFGLYQVIESAQNAGTGVGPLNGPLGMDFRDSRIFGVVPLHDSFSHDFYALQAGQAFNLITMIVAGVLTAIMIAVQLFTQLKVIPKNIPENAKNTSVYKNQKVMLYLLPIMFLGMGFSFPVGILIYWTASNVWSAVQQAVAIYRNPSPGSLAFELRRKRLGVQNKKTKGQRQQPVNKRRAKRR</sequence>
<name>YIDC_TROWT</name>
<dbReference type="EMBL" id="AE014184">
    <property type="protein sequence ID" value="AAO44902.1"/>
    <property type="status" value="ALT_INIT"/>
    <property type="molecule type" value="Genomic_DNA"/>
</dbReference>
<dbReference type="STRING" id="203267.TWT_805"/>
<dbReference type="KEGG" id="twh:TWT_805"/>
<dbReference type="eggNOG" id="COG0706">
    <property type="taxonomic scope" value="Bacteria"/>
</dbReference>
<dbReference type="HOGENOM" id="CLU_036138_3_1_11"/>
<dbReference type="OrthoDB" id="9780552at2"/>
<dbReference type="Proteomes" id="UP000002200">
    <property type="component" value="Chromosome"/>
</dbReference>
<dbReference type="GO" id="GO:0005886">
    <property type="term" value="C:plasma membrane"/>
    <property type="evidence" value="ECO:0007669"/>
    <property type="project" value="UniProtKB-SubCell"/>
</dbReference>
<dbReference type="GO" id="GO:0032977">
    <property type="term" value="F:membrane insertase activity"/>
    <property type="evidence" value="ECO:0007669"/>
    <property type="project" value="InterPro"/>
</dbReference>
<dbReference type="GO" id="GO:0051205">
    <property type="term" value="P:protein insertion into membrane"/>
    <property type="evidence" value="ECO:0007669"/>
    <property type="project" value="TreeGrafter"/>
</dbReference>
<dbReference type="GO" id="GO:0015031">
    <property type="term" value="P:protein transport"/>
    <property type="evidence" value="ECO:0007669"/>
    <property type="project" value="UniProtKB-KW"/>
</dbReference>
<dbReference type="CDD" id="cd20070">
    <property type="entry name" value="5TM_YidC_Alb3"/>
    <property type="match status" value="1"/>
</dbReference>
<dbReference type="InterPro" id="IPR001708">
    <property type="entry name" value="YidC/ALB3/OXA1/COX18"/>
</dbReference>
<dbReference type="InterPro" id="IPR028055">
    <property type="entry name" value="YidC/Oxa/ALB_C"/>
</dbReference>
<dbReference type="InterPro" id="IPR047196">
    <property type="entry name" value="YidC_ALB_C"/>
</dbReference>
<dbReference type="NCBIfam" id="NF002350">
    <property type="entry name" value="PRK01315.1"/>
    <property type="match status" value="1"/>
</dbReference>
<dbReference type="NCBIfam" id="TIGR03592">
    <property type="entry name" value="yidC_oxa1_cterm"/>
    <property type="match status" value="1"/>
</dbReference>
<dbReference type="PANTHER" id="PTHR12428:SF65">
    <property type="entry name" value="CYTOCHROME C OXIDASE ASSEMBLY PROTEIN COX18, MITOCHONDRIAL"/>
    <property type="match status" value="1"/>
</dbReference>
<dbReference type="PANTHER" id="PTHR12428">
    <property type="entry name" value="OXA1"/>
    <property type="match status" value="1"/>
</dbReference>
<dbReference type="Pfam" id="PF02096">
    <property type="entry name" value="60KD_IMP"/>
    <property type="match status" value="1"/>
</dbReference>
<reference key="1">
    <citation type="journal article" date="2003" name="Genome Res.">
        <title>Tropheryma whipplei twist: a human pathogenic Actinobacteria with a reduced genome.</title>
        <authorList>
            <person name="Raoult D."/>
            <person name="Ogata H."/>
            <person name="Audic S."/>
            <person name="Robert C."/>
            <person name="Suhre K."/>
            <person name="Drancourt M."/>
            <person name="Claverie J.-M."/>
        </authorList>
    </citation>
    <scope>NUCLEOTIDE SEQUENCE [LARGE SCALE GENOMIC DNA]</scope>
    <source>
        <strain>Twist</strain>
    </source>
</reference>
<comment type="function">
    <text evidence="1">Required for the insertion and/or proper folding and/or complex formation of integral membrane proteins into the membrane. Involved in integration of membrane proteins that insert both dependently and independently of the Sec translocase complex, as well as at least some lipoproteins. Aids folding of multispanning membrane proteins (By similarity).</text>
</comment>
<comment type="subunit">
    <text evidence="1">Interacts with the Sec translocase complex via SecD. Specifically interacts with transmembrane segments of nascent integral membrane proteins during membrane integration (By similarity).</text>
</comment>
<comment type="subcellular location">
    <subcellularLocation>
        <location evidence="1">Cell membrane</location>
        <topology evidence="1">Multi-pass membrane protein</topology>
    </subcellularLocation>
</comment>
<comment type="similarity">
    <text evidence="4">Belongs to the OXA1/ALB3/YidC family. Type 1 subfamily.</text>
</comment>
<comment type="sequence caution" evidence="4">
    <conflict type="erroneous initiation">
        <sequence resource="EMBL-CDS" id="AAO44902"/>
    </conflict>
    <text>Extended N-terminus.</text>
</comment>
<organism>
    <name type="scientific">Tropheryma whipplei (strain Twist)</name>
    <name type="common">Whipple's bacillus</name>
    <dbReference type="NCBI Taxonomy" id="203267"/>
    <lineage>
        <taxon>Bacteria</taxon>
        <taxon>Bacillati</taxon>
        <taxon>Actinomycetota</taxon>
        <taxon>Actinomycetes</taxon>
        <taxon>Micrococcales</taxon>
        <taxon>Tropherymataceae</taxon>
        <taxon>Tropheryma</taxon>
    </lineage>
</organism>